<organism>
    <name type="scientific">Staphylococcus aureus (strain Mu3 / ATCC 700698)</name>
    <dbReference type="NCBI Taxonomy" id="418127"/>
    <lineage>
        <taxon>Bacteria</taxon>
        <taxon>Bacillati</taxon>
        <taxon>Bacillota</taxon>
        <taxon>Bacilli</taxon>
        <taxon>Bacillales</taxon>
        <taxon>Staphylococcaceae</taxon>
        <taxon>Staphylococcus</taxon>
    </lineage>
</organism>
<sequence length="224" mass="25946">MVQCLVVDDDPRILNYIASHLQTEHIDAYTQPSGEAALKLLEKQRVDIAVVDIMMDGMDGFQLCNTLKNDYDIPVIMLTARDALSDKERAFISGTDDYVTKPFEVKELIFRIRAVLRRYNINSNSEMTIGNLTLNQSYLELQVSNKTMTLPNKEFQLLFMLAARPKQIFTREQIIEKIWGYDYEGDERTVDVHIKRLRQRLKKLNATLTIETVRGQGYKVENHV</sequence>
<proteinExistence type="inferred from homology"/>
<keyword id="KW-0010">Activator</keyword>
<keyword id="KW-0963">Cytoplasm</keyword>
<keyword id="KW-0238">DNA-binding</keyword>
<keyword id="KW-0597">Phosphoprotein</keyword>
<keyword id="KW-0804">Transcription</keyword>
<keyword id="KW-0805">Transcription regulation</keyword>
<keyword id="KW-0902">Two-component regulatory system</keyword>
<keyword id="KW-0843">Virulence</keyword>
<reference key="1">
    <citation type="journal article" date="2008" name="Antimicrob. Agents Chemother.">
        <title>Mutated response regulator graR is responsible for phenotypic conversion of Staphylococcus aureus from heterogeneous vancomycin-intermediate resistance to vancomycin-intermediate resistance.</title>
        <authorList>
            <person name="Neoh H.-M."/>
            <person name="Cui L."/>
            <person name="Yuzawa H."/>
            <person name="Takeuchi F."/>
            <person name="Matsuo M."/>
            <person name="Hiramatsu K."/>
        </authorList>
    </citation>
    <scope>NUCLEOTIDE SEQUENCE [LARGE SCALE GENOMIC DNA]</scope>
    <source>
        <strain>Mu3 / ATCC 700698</strain>
    </source>
</reference>
<dbReference type="EMBL" id="AP009324">
    <property type="protein sequence ID" value="BAF79228.1"/>
    <property type="molecule type" value="Genomic_DNA"/>
</dbReference>
<dbReference type="RefSeq" id="WP_000249497.1">
    <property type="nucleotide sequence ID" value="NZ_CTYB01000078.1"/>
</dbReference>
<dbReference type="SMR" id="A7X5Y5"/>
<dbReference type="KEGG" id="saw:SAHV_2345"/>
<dbReference type="HOGENOM" id="CLU_000445_30_3_9"/>
<dbReference type="GO" id="GO:0005829">
    <property type="term" value="C:cytosol"/>
    <property type="evidence" value="ECO:0007669"/>
    <property type="project" value="TreeGrafter"/>
</dbReference>
<dbReference type="GO" id="GO:0032993">
    <property type="term" value="C:protein-DNA complex"/>
    <property type="evidence" value="ECO:0007669"/>
    <property type="project" value="TreeGrafter"/>
</dbReference>
<dbReference type="GO" id="GO:0000156">
    <property type="term" value="F:phosphorelay response regulator activity"/>
    <property type="evidence" value="ECO:0007669"/>
    <property type="project" value="TreeGrafter"/>
</dbReference>
<dbReference type="GO" id="GO:0000976">
    <property type="term" value="F:transcription cis-regulatory region binding"/>
    <property type="evidence" value="ECO:0007669"/>
    <property type="project" value="TreeGrafter"/>
</dbReference>
<dbReference type="GO" id="GO:0006355">
    <property type="term" value="P:regulation of DNA-templated transcription"/>
    <property type="evidence" value="ECO:0007669"/>
    <property type="project" value="InterPro"/>
</dbReference>
<dbReference type="CDD" id="cd17574">
    <property type="entry name" value="REC_OmpR"/>
    <property type="match status" value="1"/>
</dbReference>
<dbReference type="CDD" id="cd00383">
    <property type="entry name" value="trans_reg_C"/>
    <property type="match status" value="1"/>
</dbReference>
<dbReference type="FunFam" id="1.10.10.10:FF:000018">
    <property type="entry name" value="DNA-binding response regulator ResD"/>
    <property type="match status" value="1"/>
</dbReference>
<dbReference type="Gene3D" id="3.40.50.2300">
    <property type="match status" value="1"/>
</dbReference>
<dbReference type="Gene3D" id="6.10.250.690">
    <property type="match status" value="1"/>
</dbReference>
<dbReference type="Gene3D" id="1.10.10.10">
    <property type="entry name" value="Winged helix-like DNA-binding domain superfamily/Winged helix DNA-binding domain"/>
    <property type="match status" value="1"/>
</dbReference>
<dbReference type="InterPro" id="IPR011006">
    <property type="entry name" value="CheY-like_superfamily"/>
</dbReference>
<dbReference type="InterPro" id="IPR001867">
    <property type="entry name" value="OmpR/PhoB-type_DNA-bd"/>
</dbReference>
<dbReference type="InterPro" id="IPR001789">
    <property type="entry name" value="Sig_transdc_resp-reg_receiver"/>
</dbReference>
<dbReference type="InterPro" id="IPR039420">
    <property type="entry name" value="WalR-like"/>
</dbReference>
<dbReference type="InterPro" id="IPR036388">
    <property type="entry name" value="WH-like_DNA-bd_sf"/>
</dbReference>
<dbReference type="PANTHER" id="PTHR48111:SF49">
    <property type="entry name" value="HEME RESPONSE REGULATOR HSSR"/>
    <property type="match status" value="1"/>
</dbReference>
<dbReference type="PANTHER" id="PTHR48111">
    <property type="entry name" value="REGULATOR OF RPOS"/>
    <property type="match status" value="1"/>
</dbReference>
<dbReference type="Pfam" id="PF00072">
    <property type="entry name" value="Response_reg"/>
    <property type="match status" value="1"/>
</dbReference>
<dbReference type="Pfam" id="PF00486">
    <property type="entry name" value="Trans_reg_C"/>
    <property type="match status" value="1"/>
</dbReference>
<dbReference type="SMART" id="SM00448">
    <property type="entry name" value="REC"/>
    <property type="match status" value="1"/>
</dbReference>
<dbReference type="SMART" id="SM00862">
    <property type="entry name" value="Trans_reg_C"/>
    <property type="match status" value="1"/>
</dbReference>
<dbReference type="SUPFAM" id="SSF52172">
    <property type="entry name" value="CheY-like"/>
    <property type="match status" value="1"/>
</dbReference>
<dbReference type="PROSITE" id="PS51755">
    <property type="entry name" value="OMPR_PHOB"/>
    <property type="match status" value="1"/>
</dbReference>
<dbReference type="PROSITE" id="PS50110">
    <property type="entry name" value="RESPONSE_REGULATORY"/>
    <property type="match status" value="1"/>
</dbReference>
<evidence type="ECO:0000250" key="1"/>
<evidence type="ECO:0000255" key="2">
    <source>
        <dbReference type="PROSITE-ProRule" id="PRU00169"/>
    </source>
</evidence>
<evidence type="ECO:0000255" key="3">
    <source>
        <dbReference type="PROSITE-ProRule" id="PRU01091"/>
    </source>
</evidence>
<evidence type="ECO:0000305" key="4"/>
<name>HSSR_STAA1</name>
<protein>
    <recommendedName>
        <fullName>Heme response regulator HssR</fullName>
    </recommendedName>
</protein>
<gene>
    <name type="primary">hssR</name>
    <name type="ordered locus">SAHV_2345</name>
</gene>
<feature type="chain" id="PRO_0000331325" description="Heme response regulator HssR">
    <location>
        <begin position="1"/>
        <end position="224"/>
    </location>
</feature>
<feature type="domain" description="Response regulatory" evidence="2">
    <location>
        <begin position="3"/>
        <end position="116"/>
    </location>
</feature>
<feature type="DNA-binding region" description="OmpR/PhoB-type" evidence="3">
    <location>
        <begin position="124"/>
        <end position="222"/>
    </location>
</feature>
<feature type="modified residue" description="4-aspartylphosphate" evidence="2">
    <location>
        <position position="52"/>
    </location>
</feature>
<comment type="function">
    <text evidence="1">Member of the two-component regulatory system HssS/HssR involved in intracellular heme homeostasis and tempering of staphylococcal virulence. Phosphorylated HssR binds to a direct repeat sequence within hrtAB promoter and activates the expression of hrtAB, an efflux pump, in response to extracellular heme, hemin, hemoglobin or blood (By similarity).</text>
</comment>
<comment type="subcellular location">
    <subcellularLocation>
        <location evidence="4">Cytoplasm</location>
    </subcellularLocation>
</comment>
<comment type="PTM">
    <text evidence="1">Phosphorylated by HssS.</text>
</comment>
<accession>A7X5Y5</accession>